<feature type="chain" id="PRO_0000130131" description="Small ribosomal subunit protein uS3">
    <location>
        <begin position="1"/>
        <end position="234"/>
    </location>
</feature>
<feature type="domain" description="KH type-2" evidence="1">
    <location>
        <begin position="39"/>
        <end position="107"/>
    </location>
</feature>
<dbReference type="EMBL" id="AE001439">
    <property type="protein sequence ID" value="AAD06799.1"/>
    <property type="molecule type" value="Genomic_DNA"/>
</dbReference>
<dbReference type="PIR" id="A71835">
    <property type="entry name" value="A71835"/>
</dbReference>
<dbReference type="RefSeq" id="WP_000529993.1">
    <property type="nucleotide sequence ID" value="NZ_CP011330.1"/>
</dbReference>
<dbReference type="SMR" id="Q9ZJR9"/>
<dbReference type="KEGG" id="hpj:jhp_1233"/>
<dbReference type="PATRIC" id="fig|85963.30.peg.1338"/>
<dbReference type="eggNOG" id="COG0092">
    <property type="taxonomic scope" value="Bacteria"/>
</dbReference>
<dbReference type="Proteomes" id="UP000000804">
    <property type="component" value="Chromosome"/>
</dbReference>
<dbReference type="GO" id="GO:0022627">
    <property type="term" value="C:cytosolic small ribosomal subunit"/>
    <property type="evidence" value="ECO:0007669"/>
    <property type="project" value="TreeGrafter"/>
</dbReference>
<dbReference type="GO" id="GO:0003729">
    <property type="term" value="F:mRNA binding"/>
    <property type="evidence" value="ECO:0007669"/>
    <property type="project" value="UniProtKB-UniRule"/>
</dbReference>
<dbReference type="GO" id="GO:0019843">
    <property type="term" value="F:rRNA binding"/>
    <property type="evidence" value="ECO:0007669"/>
    <property type="project" value="UniProtKB-UniRule"/>
</dbReference>
<dbReference type="GO" id="GO:0003735">
    <property type="term" value="F:structural constituent of ribosome"/>
    <property type="evidence" value="ECO:0007669"/>
    <property type="project" value="InterPro"/>
</dbReference>
<dbReference type="GO" id="GO:0006412">
    <property type="term" value="P:translation"/>
    <property type="evidence" value="ECO:0007669"/>
    <property type="project" value="UniProtKB-UniRule"/>
</dbReference>
<dbReference type="CDD" id="cd02412">
    <property type="entry name" value="KH-II_30S_S3"/>
    <property type="match status" value="1"/>
</dbReference>
<dbReference type="FunFam" id="3.30.1140.32:FF:000006">
    <property type="entry name" value="30S ribosomal protein S3"/>
    <property type="match status" value="1"/>
</dbReference>
<dbReference type="FunFam" id="3.30.300.20:FF:000001">
    <property type="entry name" value="30S ribosomal protein S3"/>
    <property type="match status" value="1"/>
</dbReference>
<dbReference type="Gene3D" id="3.30.300.20">
    <property type="match status" value="1"/>
</dbReference>
<dbReference type="Gene3D" id="3.30.1140.32">
    <property type="entry name" value="Ribosomal protein S3, C-terminal domain"/>
    <property type="match status" value="1"/>
</dbReference>
<dbReference type="HAMAP" id="MF_01309_B">
    <property type="entry name" value="Ribosomal_uS3_B"/>
    <property type="match status" value="1"/>
</dbReference>
<dbReference type="InterPro" id="IPR004087">
    <property type="entry name" value="KH_dom"/>
</dbReference>
<dbReference type="InterPro" id="IPR015946">
    <property type="entry name" value="KH_dom-like_a/b"/>
</dbReference>
<dbReference type="InterPro" id="IPR004044">
    <property type="entry name" value="KH_dom_type_2"/>
</dbReference>
<dbReference type="InterPro" id="IPR009019">
    <property type="entry name" value="KH_sf_prok-type"/>
</dbReference>
<dbReference type="InterPro" id="IPR036419">
    <property type="entry name" value="Ribosomal_S3_C_sf"/>
</dbReference>
<dbReference type="InterPro" id="IPR005704">
    <property type="entry name" value="Ribosomal_uS3_bac-typ"/>
</dbReference>
<dbReference type="InterPro" id="IPR001351">
    <property type="entry name" value="Ribosomal_uS3_C"/>
</dbReference>
<dbReference type="InterPro" id="IPR018280">
    <property type="entry name" value="Ribosomal_uS3_CS"/>
</dbReference>
<dbReference type="NCBIfam" id="TIGR01009">
    <property type="entry name" value="rpsC_bact"/>
    <property type="match status" value="1"/>
</dbReference>
<dbReference type="PANTHER" id="PTHR11760">
    <property type="entry name" value="30S/40S RIBOSOMAL PROTEIN S3"/>
    <property type="match status" value="1"/>
</dbReference>
<dbReference type="PANTHER" id="PTHR11760:SF19">
    <property type="entry name" value="SMALL RIBOSOMAL SUBUNIT PROTEIN US3C"/>
    <property type="match status" value="1"/>
</dbReference>
<dbReference type="Pfam" id="PF07650">
    <property type="entry name" value="KH_2"/>
    <property type="match status" value="1"/>
</dbReference>
<dbReference type="Pfam" id="PF00189">
    <property type="entry name" value="Ribosomal_S3_C"/>
    <property type="match status" value="1"/>
</dbReference>
<dbReference type="SMART" id="SM00322">
    <property type="entry name" value="KH"/>
    <property type="match status" value="1"/>
</dbReference>
<dbReference type="SUPFAM" id="SSF54814">
    <property type="entry name" value="Prokaryotic type KH domain (KH-domain type II)"/>
    <property type="match status" value="1"/>
</dbReference>
<dbReference type="SUPFAM" id="SSF54821">
    <property type="entry name" value="Ribosomal protein S3 C-terminal domain"/>
    <property type="match status" value="1"/>
</dbReference>
<dbReference type="PROSITE" id="PS50823">
    <property type="entry name" value="KH_TYPE_2"/>
    <property type="match status" value="1"/>
</dbReference>
<dbReference type="PROSITE" id="PS00548">
    <property type="entry name" value="RIBOSOMAL_S3"/>
    <property type="match status" value="1"/>
</dbReference>
<accession>Q9ZJR9</accession>
<keyword id="KW-0687">Ribonucleoprotein</keyword>
<keyword id="KW-0689">Ribosomal protein</keyword>
<keyword id="KW-0694">RNA-binding</keyword>
<keyword id="KW-0699">rRNA-binding</keyword>
<evidence type="ECO:0000255" key="1">
    <source>
        <dbReference type="HAMAP-Rule" id="MF_01309"/>
    </source>
</evidence>
<evidence type="ECO:0000305" key="2"/>
<name>RS3_HELPJ</name>
<gene>
    <name evidence="1" type="primary">rpsC</name>
    <name type="ordered locus">jhp_1233</name>
</gene>
<protein>
    <recommendedName>
        <fullName evidence="1">Small ribosomal subunit protein uS3</fullName>
    </recommendedName>
    <alternativeName>
        <fullName evidence="2">30S ribosomal protein S3</fullName>
    </alternativeName>
</protein>
<sequence>MGQKVNPVGLRLGINRNWTSRWFPSTRTAPSNIDEDNKIRKFLKKELYYAGVSEIVIERAAKKLRVTVVAARPGLIIGKKGVDIEKVKEGLKTLIKKEVSINIKEVKRPQADAQLAAENVATQLEKRVAFRRAMKKVMQAALKSGAKGIKVRVSGRLAGAEIARTEWYMEGRVPLHTLRAKIDYGFAEAMTVYGIIGVKVWIFKGEVLQKGIQFEKKEEAKEEREPRRSRRGRQ</sequence>
<organism>
    <name type="scientific">Helicobacter pylori (strain J99 / ATCC 700824)</name>
    <name type="common">Campylobacter pylori J99</name>
    <dbReference type="NCBI Taxonomy" id="85963"/>
    <lineage>
        <taxon>Bacteria</taxon>
        <taxon>Pseudomonadati</taxon>
        <taxon>Campylobacterota</taxon>
        <taxon>Epsilonproteobacteria</taxon>
        <taxon>Campylobacterales</taxon>
        <taxon>Helicobacteraceae</taxon>
        <taxon>Helicobacter</taxon>
    </lineage>
</organism>
<comment type="function">
    <text evidence="1">Binds the lower part of the 30S subunit head. Binds mRNA in the 70S ribosome, positioning it for translation.</text>
</comment>
<comment type="subunit">
    <text evidence="1">Part of the 30S ribosomal subunit. Forms a tight complex with proteins S10 and S14.</text>
</comment>
<comment type="similarity">
    <text evidence="1">Belongs to the universal ribosomal protein uS3 family.</text>
</comment>
<proteinExistence type="inferred from homology"/>
<reference key="1">
    <citation type="journal article" date="1999" name="Nature">
        <title>Genomic sequence comparison of two unrelated isolates of the human gastric pathogen Helicobacter pylori.</title>
        <authorList>
            <person name="Alm R.A."/>
            <person name="Ling L.-S.L."/>
            <person name="Moir D.T."/>
            <person name="King B.L."/>
            <person name="Brown E.D."/>
            <person name="Doig P.C."/>
            <person name="Smith D.R."/>
            <person name="Noonan B."/>
            <person name="Guild B.C."/>
            <person name="deJonge B.L."/>
            <person name="Carmel G."/>
            <person name="Tummino P.J."/>
            <person name="Caruso A."/>
            <person name="Uria-Nickelsen M."/>
            <person name="Mills D.M."/>
            <person name="Ives C."/>
            <person name="Gibson R."/>
            <person name="Merberg D."/>
            <person name="Mills S.D."/>
            <person name="Jiang Q."/>
            <person name="Taylor D.E."/>
            <person name="Vovis G.F."/>
            <person name="Trust T.J."/>
        </authorList>
    </citation>
    <scope>NUCLEOTIDE SEQUENCE [LARGE SCALE GENOMIC DNA]</scope>
    <source>
        <strain>J99 / ATCC 700824</strain>
    </source>
</reference>